<keyword id="KW-0040">ANK repeat</keyword>
<keyword id="KW-1185">Reference proteome</keyword>
<keyword id="KW-0677">Repeat</keyword>
<keyword id="KW-0833">Ubl conjugation pathway</keyword>
<gene>
    <name type="primary">Asb5</name>
</gene>
<dbReference type="EMBL" id="AK003770">
    <property type="protein sequence ID" value="BAB22987.1"/>
    <property type="molecule type" value="mRNA"/>
</dbReference>
<dbReference type="EMBL" id="AF398966">
    <property type="protein sequence ID" value="AAK97488.1"/>
    <property type="molecule type" value="mRNA"/>
</dbReference>
<dbReference type="CCDS" id="CCDS22307.1"/>
<dbReference type="RefSeq" id="NP_083845.1">
    <property type="nucleotide sequence ID" value="NM_029569.3"/>
</dbReference>
<dbReference type="SMR" id="Q9D1A4"/>
<dbReference type="BioGRID" id="218064">
    <property type="interactions" value="1"/>
</dbReference>
<dbReference type="FunCoup" id="Q9D1A4">
    <property type="interactions" value="12"/>
</dbReference>
<dbReference type="STRING" id="10090.ENSMUSP00000033918"/>
<dbReference type="jPOST" id="Q9D1A4"/>
<dbReference type="PaxDb" id="10090-ENSMUSP00000033918"/>
<dbReference type="ProteomicsDB" id="283184"/>
<dbReference type="Antibodypedia" id="28653">
    <property type="antibodies" value="90 antibodies from 21 providers"/>
</dbReference>
<dbReference type="DNASU" id="76294"/>
<dbReference type="Ensembl" id="ENSMUST00000033918.4">
    <property type="protein sequence ID" value="ENSMUSP00000033918.3"/>
    <property type="gene ID" value="ENSMUSG00000031519.5"/>
</dbReference>
<dbReference type="GeneID" id="76294"/>
<dbReference type="KEGG" id="mmu:76294"/>
<dbReference type="UCSC" id="uc009lse.1">
    <property type="organism name" value="mouse"/>
</dbReference>
<dbReference type="AGR" id="MGI:1923544"/>
<dbReference type="CTD" id="140458"/>
<dbReference type="MGI" id="MGI:1923544">
    <property type="gene designation" value="Asb5"/>
</dbReference>
<dbReference type="VEuPathDB" id="HostDB:ENSMUSG00000031519"/>
<dbReference type="eggNOG" id="KOG0504">
    <property type="taxonomic scope" value="Eukaryota"/>
</dbReference>
<dbReference type="GeneTree" id="ENSGT00940000159851"/>
<dbReference type="HOGENOM" id="CLU_000134_4_1_1"/>
<dbReference type="InParanoid" id="Q9D1A4"/>
<dbReference type="OrthoDB" id="44383at9989"/>
<dbReference type="PhylomeDB" id="Q9D1A4"/>
<dbReference type="TreeFam" id="TF331945"/>
<dbReference type="Reactome" id="R-MMU-8951664">
    <property type="pathway name" value="Neddylation"/>
</dbReference>
<dbReference type="Reactome" id="R-MMU-983168">
    <property type="pathway name" value="Antigen processing: Ubiquitination &amp; Proteasome degradation"/>
</dbReference>
<dbReference type="UniPathway" id="UPA00143"/>
<dbReference type="BioGRID-ORCS" id="76294">
    <property type="hits" value="5 hits in 78 CRISPR screens"/>
</dbReference>
<dbReference type="ChiTaRS" id="Asb5">
    <property type="organism name" value="mouse"/>
</dbReference>
<dbReference type="PRO" id="PR:Q9D1A4"/>
<dbReference type="Proteomes" id="UP000000589">
    <property type="component" value="Chromosome 8"/>
</dbReference>
<dbReference type="RNAct" id="Q9D1A4">
    <property type="molecule type" value="protein"/>
</dbReference>
<dbReference type="Bgee" id="ENSMUSG00000031519">
    <property type="expression patterns" value="Expressed in intercostal muscle and 110 other cell types or tissues"/>
</dbReference>
<dbReference type="ExpressionAtlas" id="Q9D1A4">
    <property type="expression patterns" value="baseline and differential"/>
</dbReference>
<dbReference type="GO" id="GO:0035556">
    <property type="term" value="P:intracellular signal transduction"/>
    <property type="evidence" value="ECO:0007669"/>
    <property type="project" value="InterPro"/>
</dbReference>
<dbReference type="GO" id="GO:0016567">
    <property type="term" value="P:protein ubiquitination"/>
    <property type="evidence" value="ECO:0007669"/>
    <property type="project" value="UniProtKB-UniPathway"/>
</dbReference>
<dbReference type="CDD" id="cd03724">
    <property type="entry name" value="SOCS_ASB5"/>
    <property type="match status" value="1"/>
</dbReference>
<dbReference type="FunFam" id="1.10.750.20:FF:000001">
    <property type="entry name" value="Ankyrin repeat and SOCS box containing 1"/>
    <property type="match status" value="1"/>
</dbReference>
<dbReference type="FunFam" id="1.25.40.20:FF:000016">
    <property type="entry name" value="Ankyrin repeat and SOCS box containing 5"/>
    <property type="match status" value="1"/>
</dbReference>
<dbReference type="Gene3D" id="1.25.40.20">
    <property type="entry name" value="Ankyrin repeat-containing domain"/>
    <property type="match status" value="1"/>
</dbReference>
<dbReference type="Gene3D" id="1.10.750.20">
    <property type="entry name" value="SOCS box"/>
    <property type="match status" value="1"/>
</dbReference>
<dbReference type="InterPro" id="IPR051573">
    <property type="entry name" value="Ankyrin-SOCS_box_domain"/>
</dbReference>
<dbReference type="InterPro" id="IPR002110">
    <property type="entry name" value="Ankyrin_rpt"/>
</dbReference>
<dbReference type="InterPro" id="IPR036770">
    <property type="entry name" value="Ankyrin_rpt-contain_sf"/>
</dbReference>
<dbReference type="InterPro" id="IPR037328">
    <property type="entry name" value="ASB5_SOCS"/>
</dbReference>
<dbReference type="InterPro" id="IPR001496">
    <property type="entry name" value="SOCS_box"/>
</dbReference>
<dbReference type="InterPro" id="IPR036036">
    <property type="entry name" value="SOCS_box-like_dom_sf"/>
</dbReference>
<dbReference type="PANTHER" id="PTHR24136:SF18">
    <property type="entry name" value="ANKYRIN REPEAT AND SOCS BOX PROTEIN 5"/>
    <property type="match status" value="1"/>
</dbReference>
<dbReference type="PANTHER" id="PTHR24136">
    <property type="entry name" value="SOWAH (DROSOPHILA) HOMOLOG"/>
    <property type="match status" value="1"/>
</dbReference>
<dbReference type="Pfam" id="PF00023">
    <property type="entry name" value="Ank"/>
    <property type="match status" value="1"/>
</dbReference>
<dbReference type="Pfam" id="PF12796">
    <property type="entry name" value="Ank_2"/>
    <property type="match status" value="2"/>
</dbReference>
<dbReference type="Pfam" id="PF07525">
    <property type="entry name" value="SOCS_box"/>
    <property type="match status" value="1"/>
</dbReference>
<dbReference type="PRINTS" id="PR01415">
    <property type="entry name" value="ANKYRIN"/>
</dbReference>
<dbReference type="SMART" id="SM00248">
    <property type="entry name" value="ANK"/>
    <property type="match status" value="6"/>
</dbReference>
<dbReference type="SMART" id="SM00969">
    <property type="entry name" value="SOCS_box"/>
    <property type="match status" value="1"/>
</dbReference>
<dbReference type="SUPFAM" id="SSF48403">
    <property type="entry name" value="Ankyrin repeat"/>
    <property type="match status" value="1"/>
</dbReference>
<dbReference type="SUPFAM" id="SSF158235">
    <property type="entry name" value="SOCS box-like"/>
    <property type="match status" value="1"/>
</dbReference>
<dbReference type="PROSITE" id="PS50297">
    <property type="entry name" value="ANK_REP_REGION"/>
    <property type="match status" value="1"/>
</dbReference>
<dbReference type="PROSITE" id="PS50088">
    <property type="entry name" value="ANK_REPEAT"/>
    <property type="match status" value="4"/>
</dbReference>
<dbReference type="PROSITE" id="PS50225">
    <property type="entry name" value="SOCS"/>
    <property type="match status" value="1"/>
</dbReference>
<organism>
    <name type="scientific">Mus musculus</name>
    <name type="common">Mouse</name>
    <dbReference type="NCBI Taxonomy" id="10090"/>
    <lineage>
        <taxon>Eukaryota</taxon>
        <taxon>Metazoa</taxon>
        <taxon>Chordata</taxon>
        <taxon>Craniata</taxon>
        <taxon>Vertebrata</taxon>
        <taxon>Euteleostomi</taxon>
        <taxon>Mammalia</taxon>
        <taxon>Eutheria</taxon>
        <taxon>Euarchontoglires</taxon>
        <taxon>Glires</taxon>
        <taxon>Rodentia</taxon>
        <taxon>Myomorpha</taxon>
        <taxon>Muroidea</taxon>
        <taxon>Muridae</taxon>
        <taxon>Murinae</taxon>
        <taxon>Mus</taxon>
        <taxon>Mus</taxon>
    </lineage>
</organism>
<accession>Q9D1A4</accession>
<protein>
    <recommendedName>
        <fullName>Ankyrin repeat and SOCS box protein 5</fullName>
        <shortName>ASB-5</shortName>
    </recommendedName>
</protein>
<sequence>MSVLEESRPFAQQLSNVYFTILSLFCFKLFVKISLAILSHFYIVKGNRKEAARIAAEFYGVSQGQGSWADRSPLHEAASQGRLLALRTLLSQGYNVNAVTIDHVTPLHEACLGDHVACARTLLEAGANANAITIDGVTPLFNACSQGSASCAELLLEYGAKAQLESCFPSPTHEAASKGHHECLDILIAWGIDVDQDIPHLGTPLYVACMSQQFHCIWKLLYAGADVHKGKYWDTPLHAAAQQPSTEIVNLLLEFGADINAKNTDLLRPVDLATSNSAVERILLQHEATPSSLCQLCRLCIRNYIGRQRFHLIPQLQLPTLLQNFLQYR</sequence>
<proteinExistence type="evidence at transcript level"/>
<evidence type="ECO:0000250" key="1"/>
<evidence type="ECO:0000255" key="2">
    <source>
        <dbReference type="PROSITE-ProRule" id="PRU00194"/>
    </source>
</evidence>
<evidence type="ECO:0000305" key="3"/>
<feature type="chain" id="PRO_0000066931" description="Ankyrin repeat and SOCS box protein 5">
    <location>
        <begin position="1"/>
        <end position="329"/>
    </location>
</feature>
<feature type="repeat" description="ANK 1">
    <location>
        <begin position="69"/>
        <end position="98"/>
    </location>
</feature>
<feature type="repeat" description="ANK 2">
    <location>
        <begin position="102"/>
        <end position="131"/>
    </location>
</feature>
<feature type="repeat" description="ANK 3">
    <location>
        <begin position="135"/>
        <end position="164"/>
    </location>
</feature>
<feature type="repeat" description="ANK 4">
    <location>
        <begin position="167"/>
        <end position="196"/>
    </location>
</feature>
<feature type="repeat" description="ANK 5">
    <location>
        <begin position="200"/>
        <end position="229"/>
    </location>
</feature>
<feature type="repeat" description="ANK 6">
    <location>
        <begin position="232"/>
        <end position="261"/>
    </location>
</feature>
<feature type="domain" description="SOCS box" evidence="2">
    <location>
        <begin position="278"/>
        <end position="329"/>
    </location>
</feature>
<comment type="function">
    <text evidence="1">May be a substrate-recognition component of a SCF-like ECS (Elongin-Cullin-SOCS-box protein) E3 ubiquitin-protein ligase complex which mediates the ubiquitination and subsequent proteasomal degradation of target proteins. May play a role in the initiation of arteriogenesis (By similarity).</text>
</comment>
<comment type="pathway">
    <text>Protein modification; protein ubiquitination.</text>
</comment>
<comment type="domain">
    <text evidence="1">The SOCS box domain mediates the interaction with the Elongin BC complex, an adapter module in different E3 ubiquitin-protein ligase complexes.</text>
</comment>
<comment type="similarity">
    <text evidence="3">Belongs to the ankyrin SOCS box (ASB) family.</text>
</comment>
<name>ASB5_MOUSE</name>
<reference key="1">
    <citation type="journal article" date="2005" name="Science">
        <title>The transcriptional landscape of the mammalian genome.</title>
        <authorList>
            <person name="Carninci P."/>
            <person name="Kasukawa T."/>
            <person name="Katayama S."/>
            <person name="Gough J."/>
            <person name="Frith M.C."/>
            <person name="Maeda N."/>
            <person name="Oyama R."/>
            <person name="Ravasi T."/>
            <person name="Lenhard B."/>
            <person name="Wells C."/>
            <person name="Kodzius R."/>
            <person name="Shimokawa K."/>
            <person name="Bajic V.B."/>
            <person name="Brenner S.E."/>
            <person name="Batalov S."/>
            <person name="Forrest A.R."/>
            <person name="Zavolan M."/>
            <person name="Davis M.J."/>
            <person name="Wilming L.G."/>
            <person name="Aidinis V."/>
            <person name="Allen J.E."/>
            <person name="Ambesi-Impiombato A."/>
            <person name="Apweiler R."/>
            <person name="Aturaliya R.N."/>
            <person name="Bailey T.L."/>
            <person name="Bansal M."/>
            <person name="Baxter L."/>
            <person name="Beisel K.W."/>
            <person name="Bersano T."/>
            <person name="Bono H."/>
            <person name="Chalk A.M."/>
            <person name="Chiu K.P."/>
            <person name="Choudhary V."/>
            <person name="Christoffels A."/>
            <person name="Clutterbuck D.R."/>
            <person name="Crowe M.L."/>
            <person name="Dalla E."/>
            <person name="Dalrymple B.P."/>
            <person name="de Bono B."/>
            <person name="Della Gatta G."/>
            <person name="di Bernardo D."/>
            <person name="Down T."/>
            <person name="Engstrom P."/>
            <person name="Fagiolini M."/>
            <person name="Faulkner G."/>
            <person name="Fletcher C.F."/>
            <person name="Fukushima T."/>
            <person name="Furuno M."/>
            <person name="Futaki S."/>
            <person name="Gariboldi M."/>
            <person name="Georgii-Hemming P."/>
            <person name="Gingeras T.R."/>
            <person name="Gojobori T."/>
            <person name="Green R.E."/>
            <person name="Gustincich S."/>
            <person name="Harbers M."/>
            <person name="Hayashi Y."/>
            <person name="Hensch T.K."/>
            <person name="Hirokawa N."/>
            <person name="Hill D."/>
            <person name="Huminiecki L."/>
            <person name="Iacono M."/>
            <person name="Ikeo K."/>
            <person name="Iwama A."/>
            <person name="Ishikawa T."/>
            <person name="Jakt M."/>
            <person name="Kanapin A."/>
            <person name="Katoh M."/>
            <person name="Kawasawa Y."/>
            <person name="Kelso J."/>
            <person name="Kitamura H."/>
            <person name="Kitano H."/>
            <person name="Kollias G."/>
            <person name="Krishnan S.P."/>
            <person name="Kruger A."/>
            <person name="Kummerfeld S.K."/>
            <person name="Kurochkin I.V."/>
            <person name="Lareau L.F."/>
            <person name="Lazarevic D."/>
            <person name="Lipovich L."/>
            <person name="Liu J."/>
            <person name="Liuni S."/>
            <person name="McWilliam S."/>
            <person name="Madan Babu M."/>
            <person name="Madera M."/>
            <person name="Marchionni L."/>
            <person name="Matsuda H."/>
            <person name="Matsuzawa S."/>
            <person name="Miki H."/>
            <person name="Mignone F."/>
            <person name="Miyake S."/>
            <person name="Morris K."/>
            <person name="Mottagui-Tabar S."/>
            <person name="Mulder N."/>
            <person name="Nakano N."/>
            <person name="Nakauchi H."/>
            <person name="Ng P."/>
            <person name="Nilsson R."/>
            <person name="Nishiguchi S."/>
            <person name="Nishikawa S."/>
            <person name="Nori F."/>
            <person name="Ohara O."/>
            <person name="Okazaki Y."/>
            <person name="Orlando V."/>
            <person name="Pang K.C."/>
            <person name="Pavan W.J."/>
            <person name="Pavesi G."/>
            <person name="Pesole G."/>
            <person name="Petrovsky N."/>
            <person name="Piazza S."/>
            <person name="Reed J."/>
            <person name="Reid J.F."/>
            <person name="Ring B.Z."/>
            <person name="Ringwald M."/>
            <person name="Rost B."/>
            <person name="Ruan Y."/>
            <person name="Salzberg S.L."/>
            <person name="Sandelin A."/>
            <person name="Schneider C."/>
            <person name="Schoenbach C."/>
            <person name="Sekiguchi K."/>
            <person name="Semple C.A."/>
            <person name="Seno S."/>
            <person name="Sessa L."/>
            <person name="Sheng Y."/>
            <person name="Shibata Y."/>
            <person name="Shimada H."/>
            <person name="Shimada K."/>
            <person name="Silva D."/>
            <person name="Sinclair B."/>
            <person name="Sperling S."/>
            <person name="Stupka E."/>
            <person name="Sugiura K."/>
            <person name="Sultana R."/>
            <person name="Takenaka Y."/>
            <person name="Taki K."/>
            <person name="Tammoja K."/>
            <person name="Tan S.L."/>
            <person name="Tang S."/>
            <person name="Taylor M.S."/>
            <person name="Tegner J."/>
            <person name="Teichmann S.A."/>
            <person name="Ueda H.R."/>
            <person name="van Nimwegen E."/>
            <person name="Verardo R."/>
            <person name="Wei C.L."/>
            <person name="Yagi K."/>
            <person name="Yamanishi H."/>
            <person name="Zabarovsky E."/>
            <person name="Zhu S."/>
            <person name="Zimmer A."/>
            <person name="Hide W."/>
            <person name="Bult C."/>
            <person name="Grimmond S.M."/>
            <person name="Teasdale R.D."/>
            <person name="Liu E.T."/>
            <person name="Brusic V."/>
            <person name="Quackenbush J."/>
            <person name="Wahlestedt C."/>
            <person name="Mattick J.S."/>
            <person name="Hume D.A."/>
            <person name="Kai C."/>
            <person name="Sasaki D."/>
            <person name="Tomaru Y."/>
            <person name="Fukuda S."/>
            <person name="Kanamori-Katayama M."/>
            <person name="Suzuki M."/>
            <person name="Aoki J."/>
            <person name="Arakawa T."/>
            <person name="Iida J."/>
            <person name="Imamura K."/>
            <person name="Itoh M."/>
            <person name="Kato T."/>
            <person name="Kawaji H."/>
            <person name="Kawagashira N."/>
            <person name="Kawashima T."/>
            <person name="Kojima M."/>
            <person name="Kondo S."/>
            <person name="Konno H."/>
            <person name="Nakano K."/>
            <person name="Ninomiya N."/>
            <person name="Nishio T."/>
            <person name="Okada M."/>
            <person name="Plessy C."/>
            <person name="Shibata K."/>
            <person name="Shiraki T."/>
            <person name="Suzuki S."/>
            <person name="Tagami M."/>
            <person name="Waki K."/>
            <person name="Watahiki A."/>
            <person name="Okamura-Oho Y."/>
            <person name="Suzuki H."/>
            <person name="Kawai J."/>
            <person name="Hayashizaki Y."/>
        </authorList>
    </citation>
    <scope>NUCLEOTIDE SEQUENCE [LARGE SCALE MRNA]</scope>
    <source>
        <strain>C57BL/6J</strain>
    </source>
</reference>
<reference key="2">
    <citation type="journal article" date="2001" name="Mol. Cell. Biol.">
        <title>Functional analysis of Asb-1 using genetic modification in mice.</title>
        <authorList>
            <person name="Kile B.T."/>
            <person name="Metcalf D."/>
            <person name="Mifsud S."/>
            <person name="DiRago L."/>
            <person name="Nicola N.A."/>
            <person name="Hilton D.J."/>
            <person name="Alexander W.S."/>
        </authorList>
    </citation>
    <scope>NUCLEOTIDE SEQUENCE [MRNA]</scope>
    <scope>TISSUE SPECIFICITY</scope>
</reference>